<reference key="1">
    <citation type="journal article" date="2006" name="Science">
        <title>Large-scale sequence analysis of avian influenza isolates.</title>
        <authorList>
            <person name="Obenauer J.C."/>
            <person name="Denson J."/>
            <person name="Mehta P.K."/>
            <person name="Su X."/>
            <person name="Mukatira S."/>
            <person name="Finkelstein D.B."/>
            <person name="Xu X."/>
            <person name="Wang J."/>
            <person name="Ma J."/>
            <person name="Fan Y."/>
            <person name="Rakestraw K.M."/>
            <person name="Webster R.G."/>
            <person name="Hoffmann E."/>
            <person name="Krauss S."/>
            <person name="Zheng J."/>
            <person name="Zhang Z."/>
            <person name="Naeve C.W."/>
        </authorList>
    </citation>
    <scope>NUCLEOTIDE SEQUENCE [GENOMIC RNA]</scope>
</reference>
<organism>
    <name type="scientific">Influenza A virus (strain A/Grey teal/Australia/2/1979 H4N4)</name>
    <dbReference type="NCBI Taxonomy" id="402464"/>
    <lineage>
        <taxon>Viruses</taxon>
        <taxon>Riboviria</taxon>
        <taxon>Orthornavirae</taxon>
        <taxon>Negarnaviricota</taxon>
        <taxon>Polyploviricotina</taxon>
        <taxon>Insthoviricetes</taxon>
        <taxon>Articulavirales</taxon>
        <taxon>Orthomyxoviridae</taxon>
        <taxon>Alphainfluenzavirus</taxon>
        <taxon>Alphainfluenzavirus influenzae</taxon>
        <taxon>Influenza A virus</taxon>
    </lineage>
</organism>
<name>M1_I79A7</name>
<feature type="chain" id="PRO_0000326308" description="Matrix protein 1">
    <location>
        <begin position="1"/>
        <end position="252"/>
    </location>
</feature>
<feature type="region of interest" description="Membrane-binding" evidence="1">
    <location>
        <begin position="1"/>
        <end position="164"/>
    </location>
</feature>
<feature type="region of interest" description="RNP-binding" evidence="1">
    <location>
        <begin position="165"/>
        <end position="252"/>
    </location>
</feature>
<feature type="short sequence motif" description="Nuclear localization signal" evidence="1">
    <location>
        <begin position="101"/>
        <end position="105"/>
    </location>
</feature>
<comment type="function">
    <text evidence="1">Plays critical roles in virus replication, from virus entry and uncoating to assembly and budding of the virus particle. M1 binding to ribonucleocapsids (RNPs) in nucleus seems to inhibit viral transcription. Interaction of viral NEP with M1-RNP is thought to promote nuclear export of the complex, which is targeted to the virion assembly site at the apical plasma membrane in polarized epithelial cells. Interactions with NA and HA may bring M1, a non-raft-associated protein, into lipid rafts. Forms a continuous shell on the inner side of the lipid bilayer in virion, where it binds the RNP. During virus entry into cell, the M2 ion channel acidifies the internal virion core, inducing M1 dissociation from the RNP. M1-free RNPs are transported to the nucleus, where viral transcription and replication can take place.</text>
</comment>
<comment type="function">
    <text evidence="1">Determines the virion's shape: spherical or filamentous. Clinical isolates of influenza are characterized by the presence of significant proportion of filamentous virions, whereas after multiple passage on eggs or cell culture, virions have only spherical morphology. Filamentous virions are thought to be important to infect neighboring cells, and spherical virions more suited to spread through aerosol between hosts organisms.</text>
</comment>
<comment type="subunit">
    <text evidence="1">Homodimer and homomultimer. Interacts with NEP. Binds ribonucleocapsid by both interacting with genomic RNA and NP protein. May interact with HA and NA. Cannot bind NP without genomic RNA.</text>
</comment>
<comment type="subcellular location">
    <subcellularLocation>
        <location evidence="1">Virion membrane</location>
        <topology evidence="1">Peripheral membrane protein</topology>
        <orientation evidence="1">Cytoplasmic side</orientation>
    </subcellularLocation>
    <subcellularLocation>
        <location evidence="1">Host nucleus</location>
    </subcellularLocation>
</comment>
<comment type="alternative products">
    <event type="alternative splicing"/>
    <isoform>
        <id>Q20PM1-1</id>
        <name>M1</name>
        <sequence type="displayed"/>
    </isoform>
    <isoform>
        <id>Q20PM2-1</id>
        <name>M2</name>
        <sequence type="external"/>
    </isoform>
    <text>Only the first 9 residues are shared by the 2 isoforms.</text>
</comment>
<comment type="miscellaneous">
    <text evidence="1">Most abundant protein in virion. When expressed alone can form virus-like particles in transfected cells.</text>
</comment>
<comment type="similarity">
    <text evidence="1">Belongs to the influenza viruses Matrix protein M1 family.</text>
</comment>
<protein>
    <recommendedName>
        <fullName evidence="1">Matrix protein 1</fullName>
        <shortName evidence="1">M1</shortName>
    </recommendedName>
</protein>
<gene>
    <name evidence="1" type="primary">M</name>
</gene>
<dbReference type="EMBL" id="CY005673">
    <property type="protein sequence ID" value="ABB20363.1"/>
    <property type="molecule type" value="Genomic_RNA"/>
</dbReference>
<dbReference type="SMR" id="Q20PM1"/>
<dbReference type="Proteomes" id="UP000008575">
    <property type="component" value="Genome"/>
</dbReference>
<dbReference type="GO" id="GO:0042025">
    <property type="term" value="C:host cell nucleus"/>
    <property type="evidence" value="ECO:0007669"/>
    <property type="project" value="UniProtKB-SubCell"/>
</dbReference>
<dbReference type="GO" id="GO:0016020">
    <property type="term" value="C:membrane"/>
    <property type="evidence" value="ECO:0007669"/>
    <property type="project" value="UniProtKB-KW"/>
</dbReference>
<dbReference type="GO" id="GO:0055036">
    <property type="term" value="C:virion membrane"/>
    <property type="evidence" value="ECO:0007669"/>
    <property type="project" value="UniProtKB-SubCell"/>
</dbReference>
<dbReference type="GO" id="GO:0003723">
    <property type="term" value="F:RNA binding"/>
    <property type="evidence" value="ECO:0007669"/>
    <property type="project" value="UniProtKB-UniRule"/>
</dbReference>
<dbReference type="GO" id="GO:0039660">
    <property type="term" value="F:structural constituent of virion"/>
    <property type="evidence" value="ECO:0007669"/>
    <property type="project" value="UniProtKB-UniRule"/>
</dbReference>
<dbReference type="GO" id="GO:0046761">
    <property type="term" value="P:viral budding from plasma membrane"/>
    <property type="evidence" value="ECO:0007669"/>
    <property type="project" value="UniProtKB-UniRule"/>
</dbReference>
<dbReference type="FunFam" id="1.10.10.180:FF:000001">
    <property type="entry name" value="Matrix protein 1"/>
    <property type="match status" value="1"/>
</dbReference>
<dbReference type="FunFam" id="1.20.91.10:FF:000001">
    <property type="entry name" value="Matrix protein 1"/>
    <property type="match status" value="1"/>
</dbReference>
<dbReference type="Gene3D" id="1.10.10.180">
    <property type="match status" value="1"/>
</dbReference>
<dbReference type="Gene3D" id="1.20.91.10">
    <property type="match status" value="1"/>
</dbReference>
<dbReference type="HAMAP" id="MF_04068">
    <property type="entry name" value="INFV_M1"/>
    <property type="match status" value="1"/>
</dbReference>
<dbReference type="InterPro" id="IPR036039">
    <property type="entry name" value="Flu_matrix_M1"/>
</dbReference>
<dbReference type="InterPro" id="IPR013188">
    <property type="entry name" value="Flu_matrix_M1_C"/>
</dbReference>
<dbReference type="InterPro" id="IPR001561">
    <property type="entry name" value="Flu_matrix_M1_N"/>
</dbReference>
<dbReference type="InterPro" id="IPR015423">
    <property type="entry name" value="Flu_matrix_M1_N_sub1"/>
</dbReference>
<dbReference type="InterPro" id="IPR015799">
    <property type="entry name" value="Flu_matrix_M1_N_sub2"/>
</dbReference>
<dbReference type="InterPro" id="IPR037533">
    <property type="entry name" value="INFV_M1"/>
</dbReference>
<dbReference type="Pfam" id="PF00598">
    <property type="entry name" value="Flu_M1"/>
    <property type="match status" value="1"/>
</dbReference>
<dbReference type="Pfam" id="PF08289">
    <property type="entry name" value="Flu_M1_C"/>
    <property type="match status" value="1"/>
</dbReference>
<dbReference type="SMART" id="SM00759">
    <property type="entry name" value="Flu_M1_C"/>
    <property type="match status" value="1"/>
</dbReference>
<dbReference type="SUPFAM" id="SSF48145">
    <property type="entry name" value="Influenza virus matrix protein M1"/>
    <property type="match status" value="1"/>
</dbReference>
<evidence type="ECO:0000255" key="1">
    <source>
        <dbReference type="HAMAP-Rule" id="MF_04068"/>
    </source>
</evidence>
<organismHost>
    <name type="scientific">Aves</name>
    <dbReference type="NCBI Taxonomy" id="8782"/>
</organismHost>
<sequence length="252" mass="27910">MSLLTEVETYVLSIVPSGPLKAEIAQRLEDVFAGKNTDLEALMEWLKTRPILSPLTKGILGFVFTLTVPSERGLQRRRFVQNALNGNGDPNNMDRAVKLYRKLKREITFHGAKEVALSYSTGALASCMGLIYNRMGTVTTEVAFGLVCATCEQIADSQHRSHRQMVTTTNPLIRHENRMVLASTTAKAMEQMAGSSEQAAEAMEVASQARQMVQAMRTIGTHPSSSAGLKDDLLENLQAYQKRMGVQMQRFK</sequence>
<accession>Q20PM1</accession>
<keyword id="KW-0025">Alternative splicing</keyword>
<keyword id="KW-1048">Host nucleus</keyword>
<keyword id="KW-0472">Membrane</keyword>
<keyword id="KW-0694">RNA-binding</keyword>
<keyword id="KW-0468">Viral matrix protein</keyword>
<keyword id="KW-0946">Virion</keyword>
<proteinExistence type="inferred from homology"/>